<reference key="1">
    <citation type="journal article" date="1992" name="J. Biol. Chem.">
        <title>Molecular cloning and characterization of human fetal liver tropomodulin. A tropomyosin-binding protein.</title>
        <authorList>
            <person name="Sung L.A."/>
            <person name="Fowler V.M."/>
            <person name="Lambert K."/>
            <person name="Sussman M.A."/>
            <person name="Karr D."/>
            <person name="Chien S."/>
        </authorList>
    </citation>
    <scope>NUCLEOTIDE SEQUENCE [MRNA] (ISOFORM 1)</scope>
    <scope>PARTIAL PROTEIN SEQUENCE</scope>
    <source>
        <tissue>Fetal liver</tissue>
    </source>
</reference>
<reference key="2">
    <citation type="journal article" date="2000" name="Gene">
        <title>Genomic organization of mouse and human erythrocyte tropomodulin genes encoding the pointed end capping protein for the actin filaments.</title>
        <authorList>
            <person name="Chu X."/>
            <person name="Thompson D."/>
            <person name="Yee L.J."/>
            <person name="Sung L.A."/>
        </authorList>
    </citation>
    <scope>NUCLEOTIDE SEQUENCE [GENOMIC DNA]</scope>
</reference>
<reference key="3">
    <citation type="journal article" date="2004" name="Nat. Genet.">
        <title>Complete sequencing and characterization of 21,243 full-length human cDNAs.</title>
        <authorList>
            <person name="Ota T."/>
            <person name="Suzuki Y."/>
            <person name="Nishikawa T."/>
            <person name="Otsuki T."/>
            <person name="Sugiyama T."/>
            <person name="Irie R."/>
            <person name="Wakamatsu A."/>
            <person name="Hayashi K."/>
            <person name="Sato H."/>
            <person name="Nagai K."/>
            <person name="Kimura K."/>
            <person name="Makita H."/>
            <person name="Sekine M."/>
            <person name="Obayashi M."/>
            <person name="Nishi T."/>
            <person name="Shibahara T."/>
            <person name="Tanaka T."/>
            <person name="Ishii S."/>
            <person name="Yamamoto J."/>
            <person name="Saito K."/>
            <person name="Kawai Y."/>
            <person name="Isono Y."/>
            <person name="Nakamura Y."/>
            <person name="Nagahari K."/>
            <person name="Murakami K."/>
            <person name="Yasuda T."/>
            <person name="Iwayanagi T."/>
            <person name="Wagatsuma M."/>
            <person name="Shiratori A."/>
            <person name="Sudo H."/>
            <person name="Hosoiri T."/>
            <person name="Kaku Y."/>
            <person name="Kodaira H."/>
            <person name="Kondo H."/>
            <person name="Sugawara M."/>
            <person name="Takahashi M."/>
            <person name="Kanda K."/>
            <person name="Yokoi T."/>
            <person name="Furuya T."/>
            <person name="Kikkawa E."/>
            <person name="Omura Y."/>
            <person name="Abe K."/>
            <person name="Kamihara K."/>
            <person name="Katsuta N."/>
            <person name="Sato K."/>
            <person name="Tanikawa M."/>
            <person name="Yamazaki M."/>
            <person name="Ninomiya K."/>
            <person name="Ishibashi T."/>
            <person name="Yamashita H."/>
            <person name="Murakawa K."/>
            <person name="Fujimori K."/>
            <person name="Tanai H."/>
            <person name="Kimata M."/>
            <person name="Watanabe M."/>
            <person name="Hiraoka S."/>
            <person name="Chiba Y."/>
            <person name="Ishida S."/>
            <person name="Ono Y."/>
            <person name="Takiguchi S."/>
            <person name="Watanabe S."/>
            <person name="Yosida M."/>
            <person name="Hotuta T."/>
            <person name="Kusano J."/>
            <person name="Kanehori K."/>
            <person name="Takahashi-Fujii A."/>
            <person name="Hara H."/>
            <person name="Tanase T.-O."/>
            <person name="Nomura Y."/>
            <person name="Togiya S."/>
            <person name="Komai F."/>
            <person name="Hara R."/>
            <person name="Takeuchi K."/>
            <person name="Arita M."/>
            <person name="Imose N."/>
            <person name="Musashino K."/>
            <person name="Yuuki H."/>
            <person name="Oshima A."/>
            <person name="Sasaki N."/>
            <person name="Aotsuka S."/>
            <person name="Yoshikawa Y."/>
            <person name="Matsunawa H."/>
            <person name="Ichihara T."/>
            <person name="Shiohata N."/>
            <person name="Sano S."/>
            <person name="Moriya S."/>
            <person name="Momiyama H."/>
            <person name="Satoh N."/>
            <person name="Takami S."/>
            <person name="Terashima Y."/>
            <person name="Suzuki O."/>
            <person name="Nakagawa S."/>
            <person name="Senoh A."/>
            <person name="Mizoguchi H."/>
            <person name="Goto Y."/>
            <person name="Shimizu F."/>
            <person name="Wakebe H."/>
            <person name="Hishigaki H."/>
            <person name="Watanabe T."/>
            <person name="Sugiyama A."/>
            <person name="Takemoto M."/>
            <person name="Kawakami B."/>
            <person name="Yamazaki M."/>
            <person name="Watanabe K."/>
            <person name="Kumagai A."/>
            <person name="Itakura S."/>
            <person name="Fukuzumi Y."/>
            <person name="Fujimori Y."/>
            <person name="Komiyama M."/>
            <person name="Tashiro H."/>
            <person name="Tanigami A."/>
            <person name="Fujiwara T."/>
            <person name="Ono T."/>
            <person name="Yamada K."/>
            <person name="Fujii Y."/>
            <person name="Ozaki K."/>
            <person name="Hirao M."/>
            <person name="Ohmori Y."/>
            <person name="Kawabata A."/>
            <person name="Hikiji T."/>
            <person name="Kobatake N."/>
            <person name="Inagaki H."/>
            <person name="Ikema Y."/>
            <person name="Okamoto S."/>
            <person name="Okitani R."/>
            <person name="Kawakami T."/>
            <person name="Noguchi S."/>
            <person name="Itoh T."/>
            <person name="Shigeta K."/>
            <person name="Senba T."/>
            <person name="Matsumura K."/>
            <person name="Nakajima Y."/>
            <person name="Mizuno T."/>
            <person name="Morinaga M."/>
            <person name="Sasaki M."/>
            <person name="Togashi T."/>
            <person name="Oyama M."/>
            <person name="Hata H."/>
            <person name="Watanabe M."/>
            <person name="Komatsu T."/>
            <person name="Mizushima-Sugano J."/>
            <person name="Satoh T."/>
            <person name="Shirai Y."/>
            <person name="Takahashi Y."/>
            <person name="Nakagawa K."/>
            <person name="Okumura K."/>
            <person name="Nagase T."/>
            <person name="Nomura N."/>
            <person name="Kikuchi H."/>
            <person name="Masuho Y."/>
            <person name="Yamashita R."/>
            <person name="Nakai K."/>
            <person name="Yada T."/>
            <person name="Nakamura Y."/>
            <person name="Ohara O."/>
            <person name="Isogai T."/>
            <person name="Sugano S."/>
        </authorList>
    </citation>
    <scope>NUCLEOTIDE SEQUENCE [LARGE SCALE MRNA] (ISOFORMS 1 AND 2)</scope>
    <source>
        <tissue>Brain</tissue>
    </source>
</reference>
<reference key="4">
    <citation type="journal article" date="2004" name="Nature">
        <title>DNA sequence and analysis of human chromosome 9.</title>
        <authorList>
            <person name="Humphray S.J."/>
            <person name="Oliver K."/>
            <person name="Hunt A.R."/>
            <person name="Plumb R.W."/>
            <person name="Loveland J.E."/>
            <person name="Howe K.L."/>
            <person name="Andrews T.D."/>
            <person name="Searle S."/>
            <person name="Hunt S.E."/>
            <person name="Scott C.E."/>
            <person name="Jones M.C."/>
            <person name="Ainscough R."/>
            <person name="Almeida J.P."/>
            <person name="Ambrose K.D."/>
            <person name="Ashwell R.I.S."/>
            <person name="Babbage A.K."/>
            <person name="Babbage S."/>
            <person name="Bagguley C.L."/>
            <person name="Bailey J."/>
            <person name="Banerjee R."/>
            <person name="Barker D.J."/>
            <person name="Barlow K.F."/>
            <person name="Bates K."/>
            <person name="Beasley H."/>
            <person name="Beasley O."/>
            <person name="Bird C.P."/>
            <person name="Bray-Allen S."/>
            <person name="Brown A.J."/>
            <person name="Brown J.Y."/>
            <person name="Burford D."/>
            <person name="Burrill W."/>
            <person name="Burton J."/>
            <person name="Carder C."/>
            <person name="Carter N.P."/>
            <person name="Chapman J.C."/>
            <person name="Chen Y."/>
            <person name="Clarke G."/>
            <person name="Clark S.Y."/>
            <person name="Clee C.M."/>
            <person name="Clegg S."/>
            <person name="Collier R.E."/>
            <person name="Corby N."/>
            <person name="Crosier M."/>
            <person name="Cummings A.T."/>
            <person name="Davies J."/>
            <person name="Dhami P."/>
            <person name="Dunn M."/>
            <person name="Dutta I."/>
            <person name="Dyer L.W."/>
            <person name="Earthrowl M.E."/>
            <person name="Faulkner L."/>
            <person name="Fleming C.J."/>
            <person name="Frankish A."/>
            <person name="Frankland J.A."/>
            <person name="French L."/>
            <person name="Fricker D.G."/>
            <person name="Garner P."/>
            <person name="Garnett J."/>
            <person name="Ghori J."/>
            <person name="Gilbert J.G.R."/>
            <person name="Glison C."/>
            <person name="Grafham D.V."/>
            <person name="Gribble S."/>
            <person name="Griffiths C."/>
            <person name="Griffiths-Jones S."/>
            <person name="Grocock R."/>
            <person name="Guy J."/>
            <person name="Hall R.E."/>
            <person name="Hammond S."/>
            <person name="Harley J.L."/>
            <person name="Harrison E.S.I."/>
            <person name="Hart E.A."/>
            <person name="Heath P.D."/>
            <person name="Henderson C.D."/>
            <person name="Hopkins B.L."/>
            <person name="Howard P.J."/>
            <person name="Howden P.J."/>
            <person name="Huckle E."/>
            <person name="Johnson C."/>
            <person name="Johnson D."/>
            <person name="Joy A.A."/>
            <person name="Kay M."/>
            <person name="Keenan S."/>
            <person name="Kershaw J.K."/>
            <person name="Kimberley A.M."/>
            <person name="King A."/>
            <person name="Knights A."/>
            <person name="Laird G.K."/>
            <person name="Langford C."/>
            <person name="Lawlor S."/>
            <person name="Leongamornlert D.A."/>
            <person name="Leversha M."/>
            <person name="Lloyd C."/>
            <person name="Lloyd D.M."/>
            <person name="Lovell J."/>
            <person name="Martin S."/>
            <person name="Mashreghi-Mohammadi M."/>
            <person name="Matthews L."/>
            <person name="McLaren S."/>
            <person name="McLay K.E."/>
            <person name="McMurray A."/>
            <person name="Milne S."/>
            <person name="Nickerson T."/>
            <person name="Nisbett J."/>
            <person name="Nordsiek G."/>
            <person name="Pearce A.V."/>
            <person name="Peck A.I."/>
            <person name="Porter K.M."/>
            <person name="Pandian R."/>
            <person name="Pelan S."/>
            <person name="Phillimore B."/>
            <person name="Povey S."/>
            <person name="Ramsey Y."/>
            <person name="Rand V."/>
            <person name="Scharfe M."/>
            <person name="Sehra H.K."/>
            <person name="Shownkeen R."/>
            <person name="Sims S.K."/>
            <person name="Skuce C.D."/>
            <person name="Smith M."/>
            <person name="Steward C.A."/>
            <person name="Swarbreck D."/>
            <person name="Sycamore N."/>
            <person name="Tester J."/>
            <person name="Thorpe A."/>
            <person name="Tracey A."/>
            <person name="Tromans A."/>
            <person name="Thomas D.W."/>
            <person name="Wall M."/>
            <person name="Wallis J.M."/>
            <person name="West A.P."/>
            <person name="Whitehead S.L."/>
            <person name="Willey D.L."/>
            <person name="Williams S.A."/>
            <person name="Wilming L."/>
            <person name="Wray P.W."/>
            <person name="Young L."/>
            <person name="Ashurst J.L."/>
            <person name="Coulson A."/>
            <person name="Blocker H."/>
            <person name="Durbin R.M."/>
            <person name="Sulston J.E."/>
            <person name="Hubbard T."/>
            <person name="Jackson M.J."/>
            <person name="Bentley D.R."/>
            <person name="Beck S."/>
            <person name="Rogers J."/>
            <person name="Dunham I."/>
        </authorList>
    </citation>
    <scope>NUCLEOTIDE SEQUENCE [LARGE SCALE GENOMIC DNA]</scope>
</reference>
<reference key="5">
    <citation type="journal article" date="2004" name="Genome Res.">
        <title>The status, quality, and expansion of the NIH full-length cDNA project: the Mammalian Gene Collection (MGC).</title>
        <authorList>
            <consortium name="The MGC Project Team"/>
        </authorList>
    </citation>
    <scope>NUCLEOTIDE SEQUENCE [LARGE SCALE MRNA] (ISOFORM 1)</scope>
    <source>
        <tissue>Uterus</tissue>
    </source>
</reference>
<reference key="6">
    <citation type="journal article" date="1994" name="Biochem. Biophys. Res. Commun.">
        <title>Erythrocyte tropomodulin binds to the N-terminus of hTM5, a tropomyosin isoform encoded by the gamma-tropomyosin gene.</title>
        <authorList>
            <person name="Sung L.A."/>
            <person name="Lin J.J.-C."/>
        </authorList>
    </citation>
    <scope>FUNCTION</scope>
    <scope>INTERACTION WITH TPM3</scope>
</reference>
<reference key="7">
    <citation type="journal article" date="2011" name="BMC Syst. Biol.">
        <title>Initial characterization of the human central proteome.</title>
        <authorList>
            <person name="Burkard T.R."/>
            <person name="Planyavsky M."/>
            <person name="Kaupe I."/>
            <person name="Breitwieser F.P."/>
            <person name="Buerckstuemmer T."/>
            <person name="Bennett K.L."/>
            <person name="Superti-Furga G."/>
            <person name="Colinge J."/>
        </authorList>
    </citation>
    <scope>IDENTIFICATION BY MASS SPECTROMETRY [LARGE SCALE ANALYSIS]</scope>
</reference>
<reference key="8">
    <citation type="journal article" date="2014" name="J. Clin. Invest.">
        <title>Leiomodin-3 dysfunction results in thin filament disorganization and nemaline myopathy.</title>
        <authorList>
            <person name="Yuen M."/>
            <person name="Sandaradura S.A."/>
            <person name="Dowling J.J."/>
            <person name="Kostyukova A.S."/>
            <person name="Moroz N."/>
            <person name="Quinlan K.G."/>
            <person name="Lehtokari V.L."/>
            <person name="Ravenscroft G."/>
            <person name="Todd E.J."/>
            <person name="Ceyhan-Birsoy O."/>
            <person name="Gokhin D.S."/>
            <person name="Maluenda J."/>
            <person name="Lek M."/>
            <person name="Nolent F."/>
            <person name="Pappas C.T."/>
            <person name="Novak S.M."/>
            <person name="D'Amico A."/>
            <person name="Malfatti E."/>
            <person name="Thomas B.P."/>
            <person name="Gabriel S.B."/>
            <person name="Gupta N."/>
            <person name="Daly M.J."/>
            <person name="Ilkovski B."/>
            <person name="Houweling P.J."/>
            <person name="Davidson A.E."/>
            <person name="Swanson L.C."/>
            <person name="Brownstein C.A."/>
            <person name="Gupta V.A."/>
            <person name="Medne L."/>
            <person name="Shannon P."/>
            <person name="Martin N."/>
            <person name="Bick D.P."/>
            <person name="Flisberg A."/>
            <person name="Holmberg E."/>
            <person name="Van den Bergh P."/>
            <person name="Lapunzina P."/>
            <person name="Waddell L.B."/>
            <person name="Sloboda D.D."/>
            <person name="Bertini E."/>
            <person name="Chitayat D."/>
            <person name="Telfer W.R."/>
            <person name="Laquerriere A."/>
            <person name="Gregorio C.C."/>
            <person name="Ottenheijm C.A."/>
            <person name="Boennemann C.G."/>
            <person name="Pelin K."/>
            <person name="Beggs A.H."/>
            <person name="Hayashi Y.K."/>
            <person name="Romero N.B."/>
            <person name="Laing N.G."/>
            <person name="Nishino I."/>
            <person name="Wallgren-Pettersson C."/>
            <person name="Melki J."/>
            <person name="Fowler V.M."/>
            <person name="MacArthur D.G."/>
            <person name="North K.N."/>
            <person name="Clarke N.F."/>
        </authorList>
    </citation>
    <scope>SUBCELLULAR LOCATION</scope>
</reference>
<reference key="9">
    <citation type="journal article" date="2024" name="Commun. Biol.">
        <title>Recessive TMOD1 mutation causes childhood cardiomyopathy.</title>
        <authorList>
            <person name="Vasilescu C."/>
            <person name="Colpan M."/>
            <person name="Ojala T.H."/>
            <person name="Manninen T."/>
            <person name="Mutka A."/>
            <person name="Ylaenen K."/>
            <person name="Rahkonen O."/>
            <person name="Poutanen T."/>
            <person name="Martelius L."/>
            <person name="Kumari R."/>
            <person name="Hinterding H."/>
            <person name="Brilhante V."/>
            <person name="Ojanen S."/>
            <person name="Lappalainen P."/>
            <person name="Koskenvuo J."/>
            <person name="Carroll C.J."/>
            <person name="Fowler V.M."/>
            <person name="Gregorio C.C."/>
            <person name="Suomalainen A."/>
        </authorList>
    </citation>
    <scope>VARIANT TRP-189</scope>
    <scope>CHARACTERIZATION OF VARIANT TRP-189</scope>
    <scope>FUNCTION</scope>
    <scope>SUBCELLULAR LOCATION</scope>
</reference>
<organism>
    <name type="scientific">Homo sapiens</name>
    <name type="common">Human</name>
    <dbReference type="NCBI Taxonomy" id="9606"/>
    <lineage>
        <taxon>Eukaryota</taxon>
        <taxon>Metazoa</taxon>
        <taxon>Chordata</taxon>
        <taxon>Craniata</taxon>
        <taxon>Vertebrata</taxon>
        <taxon>Euteleostomi</taxon>
        <taxon>Mammalia</taxon>
        <taxon>Eutheria</taxon>
        <taxon>Euarchontoglires</taxon>
        <taxon>Primates</taxon>
        <taxon>Haplorrhini</taxon>
        <taxon>Catarrhini</taxon>
        <taxon>Hominidae</taxon>
        <taxon>Homo</taxon>
    </lineage>
</organism>
<proteinExistence type="evidence at protein level"/>
<name>TMOD1_HUMAN</name>
<comment type="function">
    <text evidence="5 6">Blocks the elongation and depolymerization of the actin filaments at the pointed end (PubMed:38168645). The Tmod/TM complex contributes to the formation of the short actin protofilament, which in turn defines the geometry of the membrane skeleton. May play an important role in regulating the organization of actin filaments by preferentially binding to a specific tropomyosin isoform at its N-terminus.</text>
</comment>
<comment type="subunit">
    <text evidence="1">Binds to the N-terminus of tropomyosin and to actin. Interacts with FLII.</text>
</comment>
<comment type="subcellular location">
    <subcellularLocation>
        <location evidence="4">Cytoplasm</location>
        <location evidence="4">Cytoskeleton</location>
    </subcellularLocation>
    <text evidence="4 5">In myofibrils with sarcomeric structure, localizes to the pointed end of actin thin filaments (PubMed:25250574, PubMed:38168645).</text>
</comment>
<comment type="alternative products">
    <event type="alternative splicing"/>
    <isoform>
        <id>P28289-1</id>
        <name>1</name>
        <sequence type="displayed"/>
    </isoform>
    <isoform>
        <id>P28289-2</id>
        <name>2</name>
        <sequence type="described" ref="VSP_056863 VSP_056864"/>
    </isoform>
</comment>
<comment type="tissue specificity">
    <text>Highly expressed in the erythrocyte, heart and skeletal muscle.</text>
</comment>
<comment type="similarity">
    <text evidence="8">Belongs to the tropomodulin family.</text>
</comment>
<evidence type="ECO:0000250" key="1">
    <source>
        <dbReference type="UniProtKB" id="P70567"/>
    </source>
</evidence>
<evidence type="ECO:0000255" key="2"/>
<evidence type="ECO:0000256" key="3">
    <source>
        <dbReference type="SAM" id="MobiDB-lite"/>
    </source>
</evidence>
<evidence type="ECO:0000269" key="4">
    <source>
    </source>
</evidence>
<evidence type="ECO:0000269" key="5">
    <source>
    </source>
</evidence>
<evidence type="ECO:0000269" key="6">
    <source>
    </source>
</evidence>
<evidence type="ECO:0000303" key="7">
    <source>
    </source>
</evidence>
<evidence type="ECO:0000305" key="8"/>
<evidence type="ECO:0007829" key="9">
    <source>
        <dbReference type="PDB" id="4PKG"/>
    </source>
</evidence>
<evidence type="ECO:0007829" key="10">
    <source>
        <dbReference type="PDB" id="4PKI"/>
    </source>
</evidence>
<evidence type="ECO:0007829" key="11">
    <source>
        <dbReference type="PDB" id="4Z8G"/>
    </source>
</evidence>
<dbReference type="EMBL" id="M77016">
    <property type="protein sequence ID" value="AAA61224.1"/>
    <property type="molecule type" value="mRNA"/>
</dbReference>
<dbReference type="EMBL" id="AF288155">
    <property type="protein sequence ID" value="AAG30124.1"/>
    <property type="molecule type" value="Genomic_DNA"/>
</dbReference>
<dbReference type="EMBL" id="AF288147">
    <property type="protein sequence ID" value="AAG30124.1"/>
    <property type="status" value="JOINED"/>
    <property type="molecule type" value="Genomic_DNA"/>
</dbReference>
<dbReference type="EMBL" id="AF288148">
    <property type="protein sequence ID" value="AAG30124.1"/>
    <property type="status" value="JOINED"/>
    <property type="molecule type" value="Genomic_DNA"/>
</dbReference>
<dbReference type="EMBL" id="AF288149">
    <property type="protein sequence ID" value="AAG30124.1"/>
    <property type="status" value="JOINED"/>
    <property type="molecule type" value="Genomic_DNA"/>
</dbReference>
<dbReference type="EMBL" id="AF288150">
    <property type="protein sequence ID" value="AAG30124.1"/>
    <property type="status" value="JOINED"/>
    <property type="molecule type" value="Genomic_DNA"/>
</dbReference>
<dbReference type="EMBL" id="AF288151">
    <property type="protein sequence ID" value="AAG30124.1"/>
    <property type="status" value="JOINED"/>
    <property type="molecule type" value="Genomic_DNA"/>
</dbReference>
<dbReference type="EMBL" id="AF288152">
    <property type="protein sequence ID" value="AAG30124.1"/>
    <property type="status" value="JOINED"/>
    <property type="molecule type" value="Genomic_DNA"/>
</dbReference>
<dbReference type="EMBL" id="AF288153">
    <property type="protein sequence ID" value="AAG30124.1"/>
    <property type="status" value="JOINED"/>
    <property type="molecule type" value="Genomic_DNA"/>
</dbReference>
<dbReference type="EMBL" id="AF288154">
    <property type="protein sequence ID" value="AAG30124.1"/>
    <property type="status" value="JOINED"/>
    <property type="molecule type" value="Genomic_DNA"/>
</dbReference>
<dbReference type="EMBL" id="AK095748">
    <property type="protein sequence ID" value="BAG53119.1"/>
    <property type="molecule type" value="mRNA"/>
</dbReference>
<dbReference type="EMBL" id="AK314533">
    <property type="protein sequence ID" value="BAG37124.1"/>
    <property type="molecule type" value="mRNA"/>
</dbReference>
<dbReference type="EMBL" id="AL162385">
    <property type="status" value="NOT_ANNOTATED_CDS"/>
    <property type="molecule type" value="Genomic_DNA"/>
</dbReference>
<dbReference type="EMBL" id="BC002660">
    <property type="protein sequence ID" value="AAH02660.1"/>
    <property type="molecule type" value="mRNA"/>
</dbReference>
<dbReference type="CCDS" id="CCDS6726.1">
    <molecule id="P28289-1"/>
</dbReference>
<dbReference type="PIR" id="A42336">
    <property type="entry name" value="A42336"/>
</dbReference>
<dbReference type="RefSeq" id="NP_001159588.1">
    <molecule id="P28289-1"/>
    <property type="nucleotide sequence ID" value="NM_001166116.2"/>
</dbReference>
<dbReference type="RefSeq" id="NP_003266.1">
    <molecule id="P28289-1"/>
    <property type="nucleotide sequence ID" value="NM_003275.4"/>
</dbReference>
<dbReference type="PDB" id="4PKG">
    <property type="method" value="X-ray"/>
    <property type="resolution" value="1.80 A"/>
    <property type="chains" value="G=50-101"/>
</dbReference>
<dbReference type="PDB" id="4PKH">
    <property type="method" value="X-ray"/>
    <property type="resolution" value="2.15 A"/>
    <property type="chains" value="B/E/G/J=50-101"/>
</dbReference>
<dbReference type="PDB" id="4PKI">
    <property type="method" value="X-ray"/>
    <property type="resolution" value="2.30 A"/>
    <property type="chains" value="G=160-349"/>
</dbReference>
<dbReference type="PDB" id="4Z8G">
    <property type="method" value="X-ray"/>
    <property type="resolution" value="2.10 A"/>
    <property type="chains" value="A=163-228"/>
</dbReference>
<dbReference type="PDB" id="4Z94">
    <property type="method" value="X-ray"/>
    <property type="resolution" value="2.40 A"/>
    <property type="chains" value="G=160-228"/>
</dbReference>
<dbReference type="PDB" id="8F8T">
    <property type="method" value="EM"/>
    <property type="resolution" value="3.26 A"/>
    <property type="chains" value="T=1-359"/>
</dbReference>
<dbReference type="PDBsum" id="4PKG"/>
<dbReference type="PDBsum" id="4PKH"/>
<dbReference type="PDBsum" id="4PKI"/>
<dbReference type="PDBsum" id="4Z8G"/>
<dbReference type="PDBsum" id="4Z94"/>
<dbReference type="PDBsum" id="8F8T"/>
<dbReference type="EMDB" id="EMD-28936"/>
<dbReference type="SMR" id="P28289"/>
<dbReference type="BioGRID" id="112966">
    <property type="interactions" value="219"/>
</dbReference>
<dbReference type="CORUM" id="P28289"/>
<dbReference type="FunCoup" id="P28289">
    <property type="interactions" value="1045"/>
</dbReference>
<dbReference type="IntAct" id="P28289">
    <property type="interactions" value="102"/>
</dbReference>
<dbReference type="MINT" id="P28289"/>
<dbReference type="STRING" id="9606.ENSP00000259365"/>
<dbReference type="GlyGen" id="P28289">
    <property type="glycosylation" value="1 site, 1 O-linked glycan (1 site)"/>
</dbReference>
<dbReference type="iPTMnet" id="P28289"/>
<dbReference type="PhosphoSitePlus" id="P28289"/>
<dbReference type="BioMuta" id="TMOD1"/>
<dbReference type="DMDM" id="135922"/>
<dbReference type="jPOST" id="P28289"/>
<dbReference type="MassIVE" id="P28289"/>
<dbReference type="PaxDb" id="9606-ENSP00000259365"/>
<dbReference type="PeptideAtlas" id="P28289"/>
<dbReference type="ProteomicsDB" id="54457">
    <molecule id="P28289-1"/>
</dbReference>
<dbReference type="ProteomicsDB" id="64694"/>
<dbReference type="Pumba" id="P28289"/>
<dbReference type="Antibodypedia" id="28841">
    <property type="antibodies" value="303 antibodies from 28 providers"/>
</dbReference>
<dbReference type="DNASU" id="7111"/>
<dbReference type="Ensembl" id="ENST00000259365.9">
    <molecule id="P28289-1"/>
    <property type="protein sequence ID" value="ENSP00000259365.3"/>
    <property type="gene ID" value="ENSG00000136842.14"/>
</dbReference>
<dbReference type="Ensembl" id="ENST00000375175.1">
    <molecule id="P28289-2"/>
    <property type="protein sequence ID" value="ENSP00000364318.1"/>
    <property type="gene ID" value="ENSG00000136842.14"/>
</dbReference>
<dbReference type="Ensembl" id="ENST00000395211.6">
    <molecule id="P28289-1"/>
    <property type="protein sequence ID" value="ENSP00000378637.2"/>
    <property type="gene ID" value="ENSG00000136842.14"/>
</dbReference>
<dbReference type="GeneID" id="7111"/>
<dbReference type="KEGG" id="hsa:7111"/>
<dbReference type="MANE-Select" id="ENST00000259365.9">
    <property type="protein sequence ID" value="ENSP00000259365.3"/>
    <property type="RefSeq nucleotide sequence ID" value="NM_003275.4"/>
    <property type="RefSeq protein sequence ID" value="NP_003266.1"/>
</dbReference>
<dbReference type="UCSC" id="uc004axk.3">
    <molecule id="P28289-1"/>
    <property type="organism name" value="human"/>
</dbReference>
<dbReference type="AGR" id="HGNC:11871"/>
<dbReference type="CTD" id="7111"/>
<dbReference type="DisGeNET" id="7111"/>
<dbReference type="GeneCards" id="TMOD1"/>
<dbReference type="HGNC" id="HGNC:11871">
    <property type="gene designation" value="TMOD1"/>
</dbReference>
<dbReference type="HPA" id="ENSG00000136842">
    <property type="expression patterns" value="Tissue enhanced (skeletal muscle, tongue)"/>
</dbReference>
<dbReference type="MIM" id="190930">
    <property type="type" value="gene"/>
</dbReference>
<dbReference type="neXtProt" id="NX_P28289"/>
<dbReference type="OpenTargets" id="ENSG00000136842"/>
<dbReference type="PharmGKB" id="PA36572"/>
<dbReference type="VEuPathDB" id="HostDB:ENSG00000136842"/>
<dbReference type="eggNOG" id="KOG3735">
    <property type="taxonomic scope" value="Eukaryota"/>
</dbReference>
<dbReference type="GeneTree" id="ENSGT00940000158695"/>
<dbReference type="HOGENOM" id="CLU_031052_0_0_1"/>
<dbReference type="InParanoid" id="P28289"/>
<dbReference type="OMA" id="HIMESAL"/>
<dbReference type="OrthoDB" id="2163268at2759"/>
<dbReference type="PAN-GO" id="P28289">
    <property type="GO annotations" value="7 GO annotations based on evolutionary models"/>
</dbReference>
<dbReference type="PhylomeDB" id="P28289"/>
<dbReference type="TreeFam" id="TF315841"/>
<dbReference type="PathwayCommons" id="P28289"/>
<dbReference type="Reactome" id="R-HSA-390522">
    <property type="pathway name" value="Striated Muscle Contraction"/>
</dbReference>
<dbReference type="SignaLink" id="P28289"/>
<dbReference type="SIGNOR" id="P28289"/>
<dbReference type="BioGRID-ORCS" id="7111">
    <property type="hits" value="13 hits in 1162 CRISPR screens"/>
</dbReference>
<dbReference type="CD-CODE" id="FB4E32DD">
    <property type="entry name" value="Presynaptic clusters and postsynaptic densities"/>
</dbReference>
<dbReference type="ChiTaRS" id="TMOD1">
    <property type="organism name" value="human"/>
</dbReference>
<dbReference type="EvolutionaryTrace" id="P28289"/>
<dbReference type="GeneWiki" id="TMOD1"/>
<dbReference type="GenomeRNAi" id="7111"/>
<dbReference type="Pharos" id="P28289">
    <property type="development level" value="Tbio"/>
</dbReference>
<dbReference type="PRO" id="PR:P28289"/>
<dbReference type="Proteomes" id="UP000005640">
    <property type="component" value="Chromosome 9"/>
</dbReference>
<dbReference type="RNAct" id="P28289">
    <property type="molecule type" value="protein"/>
</dbReference>
<dbReference type="Bgee" id="ENSG00000136842">
    <property type="expression patterns" value="Expressed in type B pancreatic cell and 188 other cell types or tissues"/>
</dbReference>
<dbReference type="GO" id="GO:0005884">
    <property type="term" value="C:actin filament"/>
    <property type="evidence" value="ECO:0000314"/>
    <property type="project" value="UniProtKB"/>
</dbReference>
<dbReference type="GO" id="GO:0030863">
    <property type="term" value="C:cortical cytoskeleton"/>
    <property type="evidence" value="ECO:0007669"/>
    <property type="project" value="Ensembl"/>
</dbReference>
<dbReference type="GO" id="GO:0005856">
    <property type="term" value="C:cytoskeleton"/>
    <property type="evidence" value="ECO:0000318"/>
    <property type="project" value="GO_Central"/>
</dbReference>
<dbReference type="GO" id="GO:0005829">
    <property type="term" value="C:cytosol"/>
    <property type="evidence" value="ECO:0000304"/>
    <property type="project" value="Reactome"/>
</dbReference>
<dbReference type="GO" id="GO:0016020">
    <property type="term" value="C:membrane"/>
    <property type="evidence" value="ECO:0007669"/>
    <property type="project" value="Ensembl"/>
</dbReference>
<dbReference type="GO" id="GO:0030016">
    <property type="term" value="C:myofibril"/>
    <property type="evidence" value="ECO:0000314"/>
    <property type="project" value="UniProtKB"/>
</dbReference>
<dbReference type="GO" id="GO:0030017">
    <property type="term" value="C:sarcomere"/>
    <property type="evidence" value="ECO:0000314"/>
    <property type="project" value="UniProtKB"/>
</dbReference>
<dbReference type="GO" id="GO:0005865">
    <property type="term" value="C:striated muscle thin filament"/>
    <property type="evidence" value="ECO:0000314"/>
    <property type="project" value="UniProtKB"/>
</dbReference>
<dbReference type="GO" id="GO:0003779">
    <property type="term" value="F:actin binding"/>
    <property type="evidence" value="ECO:0000314"/>
    <property type="project" value="UniProtKB"/>
</dbReference>
<dbReference type="GO" id="GO:0005523">
    <property type="term" value="F:tropomyosin binding"/>
    <property type="evidence" value="ECO:0000318"/>
    <property type="project" value="GO_Central"/>
</dbReference>
<dbReference type="GO" id="GO:0007015">
    <property type="term" value="P:actin filament organization"/>
    <property type="evidence" value="ECO:0000318"/>
    <property type="project" value="GO_Central"/>
</dbReference>
<dbReference type="GO" id="GO:0008344">
    <property type="term" value="P:adult locomotory behavior"/>
    <property type="evidence" value="ECO:0007669"/>
    <property type="project" value="Ensembl"/>
</dbReference>
<dbReference type="GO" id="GO:0070307">
    <property type="term" value="P:lens fiber cell development"/>
    <property type="evidence" value="ECO:0007669"/>
    <property type="project" value="Ensembl"/>
</dbReference>
<dbReference type="GO" id="GO:0006936">
    <property type="term" value="P:muscle contraction"/>
    <property type="evidence" value="ECO:0000318"/>
    <property type="project" value="GO_Central"/>
</dbReference>
<dbReference type="GO" id="GO:0030239">
    <property type="term" value="P:myofibril assembly"/>
    <property type="evidence" value="ECO:0000318"/>
    <property type="project" value="GO_Central"/>
</dbReference>
<dbReference type="GO" id="GO:0051694">
    <property type="term" value="P:pointed-end actin filament capping"/>
    <property type="evidence" value="ECO:0007669"/>
    <property type="project" value="InterPro"/>
</dbReference>
<dbReference type="FunFam" id="3.80.10.10:FF:000006">
    <property type="entry name" value="Tropomodulin 2"/>
    <property type="match status" value="1"/>
</dbReference>
<dbReference type="Gene3D" id="3.80.10.10">
    <property type="entry name" value="Ribonuclease Inhibitor"/>
    <property type="match status" value="1"/>
</dbReference>
<dbReference type="InterPro" id="IPR032675">
    <property type="entry name" value="LRR_dom_sf"/>
</dbReference>
<dbReference type="InterPro" id="IPR004934">
    <property type="entry name" value="TMOD"/>
</dbReference>
<dbReference type="PANTHER" id="PTHR10901">
    <property type="entry name" value="TROPOMODULIN"/>
    <property type="match status" value="1"/>
</dbReference>
<dbReference type="PANTHER" id="PTHR10901:SF8">
    <property type="entry name" value="TROPOMODULIN-1"/>
    <property type="match status" value="1"/>
</dbReference>
<dbReference type="Pfam" id="PF03250">
    <property type="entry name" value="Tropomodulin"/>
    <property type="match status" value="1"/>
</dbReference>
<dbReference type="SUPFAM" id="SSF52047">
    <property type="entry name" value="RNI-like"/>
    <property type="match status" value="1"/>
</dbReference>
<gene>
    <name type="primary">TMOD1</name>
    <name type="synonym">D9S57E</name>
    <name type="synonym">TMOD</name>
</gene>
<protein>
    <recommendedName>
        <fullName>Tropomodulin-1</fullName>
    </recommendedName>
    <alternativeName>
        <fullName>Erythrocyte tropomodulin</fullName>
        <shortName>E-Tmod</shortName>
    </alternativeName>
</protein>
<accession>P28289</accession>
<accession>B2RB77</accession>
<accession>Q5T7W3</accession>
<accession>Q9BUF1</accession>
<sequence length="359" mass="40569">MSYRRELEKYRDLDEDEILGALTEEELRTLENELDELDPDNALLPAGLRQKDQTTKAPTGPFKREELLDHLEKQAKEFKDREDLVPYTGEKRGKVWVPKQKPLDPVLESVTLEPELEEALANASDAELCDIAAILGMHTLMSNQQYYQALSSSSIMNKEGLNSVIKPTQYKPVPDEEPNSTDVEETLERIKNNDPKLEEVNLNNIRNIPIPTLKAYAEALKENSYVKKFSIVGTRSNDPVAYALAEMLKENKVLKTLNVESNFISGAGILRLVEALPYNTSLVEMKIDNQSQPLGNKVEMEIVSMLEKNATLLKFGYHFTQQGPRLRASNAMMNNNDLVRKRRLADLTGPIIPKCRSGV</sequence>
<feature type="chain" id="PRO_0000186128" description="Tropomodulin-1">
    <location>
        <begin position="1"/>
        <end position="359"/>
    </location>
</feature>
<feature type="region of interest" description="Disordered" evidence="3">
    <location>
        <begin position="36"/>
        <end position="61"/>
    </location>
</feature>
<feature type="region of interest" description="Tropomyosin-binding" evidence="2">
    <location>
        <begin position="39"/>
        <end position="138"/>
    </location>
</feature>
<feature type="splice variant" id="VSP_056863" description="In isoform 2." evidence="7">
    <original>MSYRRE</original>
    <variation>MSQVLS</variation>
    <location>
        <begin position="1"/>
        <end position="6"/>
    </location>
</feature>
<feature type="splice variant" id="VSP_056864" description="In isoform 2." evidence="7">
    <location>
        <begin position="7"/>
        <end position="133"/>
    </location>
</feature>
<feature type="sequence variant" id="VAR_089206" description="Found in patients with childhood-onset cardiomyopathy; uncertain significance; decreased function in pointed-end actin filament capping; no effect on localization to actin thin filaments in cardiomyocytes induced from patient-derived pluripotent stem cells; dbSNP:rs766826917." evidence="5">
    <original>R</original>
    <variation>W</variation>
    <location>
        <position position="189"/>
    </location>
</feature>
<feature type="sequence conflict" description="In Ref. 5; AAH02660." evidence="8" ref="5">
    <original>E</original>
    <variation>K</variation>
    <location>
        <position position="17"/>
    </location>
</feature>
<feature type="sequence conflict" description="In Ref. 3; BAG37124." evidence="8" ref="3">
    <original>K</original>
    <variation>E</variation>
    <location>
        <position position="76"/>
    </location>
</feature>
<feature type="sequence conflict" description="In Ref. 3; BAG37124." evidence="8" ref="3">
    <original>N</original>
    <variation>S</variation>
    <location>
        <position position="289"/>
    </location>
</feature>
<feature type="helix" evidence="9">
    <location>
        <begin position="64"/>
        <end position="76"/>
    </location>
</feature>
<feature type="helix" evidence="11">
    <location>
        <begin position="180"/>
        <end position="191"/>
    </location>
</feature>
<feature type="strand" evidence="11">
    <location>
        <begin position="199"/>
        <end position="201"/>
    </location>
</feature>
<feature type="helix" evidence="11">
    <location>
        <begin position="210"/>
        <end position="220"/>
    </location>
</feature>
<feature type="strand" evidence="10">
    <location>
        <begin position="228"/>
        <end position="230"/>
    </location>
</feature>
<feature type="helix" evidence="10">
    <location>
        <begin position="238"/>
        <end position="248"/>
    </location>
</feature>
<feature type="strand" evidence="10">
    <location>
        <begin position="256"/>
        <end position="258"/>
    </location>
</feature>
<feature type="helix" evidence="10">
    <location>
        <begin position="266"/>
        <end position="274"/>
    </location>
</feature>
<feature type="helix" evidence="10">
    <location>
        <begin position="275"/>
        <end position="278"/>
    </location>
</feature>
<feature type="strand" evidence="10">
    <location>
        <begin position="284"/>
        <end position="286"/>
    </location>
</feature>
<feature type="helix" evidence="10">
    <location>
        <begin position="296"/>
        <end position="306"/>
    </location>
</feature>
<feature type="strand" evidence="10">
    <location>
        <begin position="314"/>
        <end position="316"/>
    </location>
</feature>
<feature type="helix" evidence="10">
    <location>
        <begin position="322"/>
        <end position="345"/>
    </location>
</feature>
<feature type="turn" evidence="10">
    <location>
        <begin position="346"/>
        <end position="348"/>
    </location>
</feature>
<keyword id="KW-0002">3D-structure</keyword>
<keyword id="KW-0009">Actin-binding</keyword>
<keyword id="KW-0025">Alternative splicing</keyword>
<keyword id="KW-0963">Cytoplasm</keyword>
<keyword id="KW-0206">Cytoskeleton</keyword>
<keyword id="KW-0903">Direct protein sequencing</keyword>
<keyword id="KW-1267">Proteomics identification</keyword>
<keyword id="KW-1185">Reference proteome</keyword>